<dbReference type="EMBL" id="CP000964">
    <property type="protein sequence ID" value="ACI08732.1"/>
    <property type="molecule type" value="Genomic_DNA"/>
</dbReference>
<dbReference type="SMR" id="B5XVK3"/>
<dbReference type="KEGG" id="kpe:KPK_1188"/>
<dbReference type="HOGENOM" id="CLU_100590_5_1_6"/>
<dbReference type="Proteomes" id="UP000001734">
    <property type="component" value="Chromosome"/>
</dbReference>
<dbReference type="GO" id="GO:0005737">
    <property type="term" value="C:cytoplasm"/>
    <property type="evidence" value="ECO:0007669"/>
    <property type="project" value="UniProtKB-ARBA"/>
</dbReference>
<dbReference type="GO" id="GO:0015935">
    <property type="term" value="C:small ribosomal subunit"/>
    <property type="evidence" value="ECO:0007669"/>
    <property type="project" value="TreeGrafter"/>
</dbReference>
<dbReference type="GO" id="GO:0003735">
    <property type="term" value="F:structural constituent of ribosome"/>
    <property type="evidence" value="ECO:0007669"/>
    <property type="project" value="InterPro"/>
</dbReference>
<dbReference type="GO" id="GO:0006412">
    <property type="term" value="P:translation"/>
    <property type="evidence" value="ECO:0007669"/>
    <property type="project" value="UniProtKB-UniRule"/>
</dbReference>
<dbReference type="FunFam" id="3.30.1320.10:FF:000001">
    <property type="entry name" value="30S ribosomal protein S16"/>
    <property type="match status" value="1"/>
</dbReference>
<dbReference type="Gene3D" id="3.30.1320.10">
    <property type="match status" value="1"/>
</dbReference>
<dbReference type="HAMAP" id="MF_00385">
    <property type="entry name" value="Ribosomal_bS16"/>
    <property type="match status" value="1"/>
</dbReference>
<dbReference type="InterPro" id="IPR000307">
    <property type="entry name" value="Ribosomal_bS16"/>
</dbReference>
<dbReference type="InterPro" id="IPR020592">
    <property type="entry name" value="Ribosomal_bS16_CS"/>
</dbReference>
<dbReference type="InterPro" id="IPR023803">
    <property type="entry name" value="Ribosomal_bS16_dom_sf"/>
</dbReference>
<dbReference type="NCBIfam" id="TIGR00002">
    <property type="entry name" value="S16"/>
    <property type="match status" value="1"/>
</dbReference>
<dbReference type="PANTHER" id="PTHR12919">
    <property type="entry name" value="30S RIBOSOMAL PROTEIN S16"/>
    <property type="match status" value="1"/>
</dbReference>
<dbReference type="PANTHER" id="PTHR12919:SF20">
    <property type="entry name" value="SMALL RIBOSOMAL SUBUNIT PROTEIN BS16M"/>
    <property type="match status" value="1"/>
</dbReference>
<dbReference type="Pfam" id="PF00886">
    <property type="entry name" value="Ribosomal_S16"/>
    <property type="match status" value="1"/>
</dbReference>
<dbReference type="SUPFAM" id="SSF54565">
    <property type="entry name" value="Ribosomal protein S16"/>
    <property type="match status" value="1"/>
</dbReference>
<dbReference type="PROSITE" id="PS00732">
    <property type="entry name" value="RIBOSOMAL_S16"/>
    <property type="match status" value="1"/>
</dbReference>
<sequence length="82" mass="9048">MVTIRLARHGAKKRPFYQVVVTDSRNARNGRFIERVGFFNPIASGAEEETRLDLDRIAHWVGLGATVSDRVAALIKAANKAA</sequence>
<keyword id="KW-0687">Ribonucleoprotein</keyword>
<keyword id="KW-0689">Ribosomal protein</keyword>
<gene>
    <name evidence="1" type="primary">rpsP</name>
    <name type="ordered locus">KPK_1188</name>
</gene>
<organism>
    <name type="scientific">Klebsiella pneumoniae (strain 342)</name>
    <dbReference type="NCBI Taxonomy" id="507522"/>
    <lineage>
        <taxon>Bacteria</taxon>
        <taxon>Pseudomonadati</taxon>
        <taxon>Pseudomonadota</taxon>
        <taxon>Gammaproteobacteria</taxon>
        <taxon>Enterobacterales</taxon>
        <taxon>Enterobacteriaceae</taxon>
        <taxon>Klebsiella/Raoultella group</taxon>
        <taxon>Klebsiella</taxon>
        <taxon>Klebsiella pneumoniae complex</taxon>
    </lineage>
</organism>
<comment type="similarity">
    <text evidence="1">Belongs to the bacterial ribosomal protein bS16 family.</text>
</comment>
<proteinExistence type="inferred from homology"/>
<protein>
    <recommendedName>
        <fullName evidence="1">Small ribosomal subunit protein bS16</fullName>
    </recommendedName>
    <alternativeName>
        <fullName evidence="2">30S ribosomal protein S16</fullName>
    </alternativeName>
</protein>
<reference key="1">
    <citation type="journal article" date="2008" name="PLoS Genet.">
        <title>Complete genome sequence of the N2-fixing broad host range endophyte Klebsiella pneumoniae 342 and virulence predictions verified in mice.</title>
        <authorList>
            <person name="Fouts D.E."/>
            <person name="Tyler H.L."/>
            <person name="DeBoy R.T."/>
            <person name="Daugherty S."/>
            <person name="Ren Q."/>
            <person name="Badger J.H."/>
            <person name="Durkin A.S."/>
            <person name="Huot H."/>
            <person name="Shrivastava S."/>
            <person name="Kothari S."/>
            <person name="Dodson R.J."/>
            <person name="Mohamoud Y."/>
            <person name="Khouri H."/>
            <person name="Roesch L.F.W."/>
            <person name="Krogfelt K.A."/>
            <person name="Struve C."/>
            <person name="Triplett E.W."/>
            <person name="Methe B.A."/>
        </authorList>
    </citation>
    <scope>NUCLEOTIDE SEQUENCE [LARGE SCALE GENOMIC DNA]</scope>
    <source>
        <strain>342</strain>
    </source>
</reference>
<name>RS16_KLEP3</name>
<accession>B5XVK3</accession>
<feature type="chain" id="PRO_1000196420" description="Small ribosomal subunit protein bS16">
    <location>
        <begin position="1"/>
        <end position="82"/>
    </location>
</feature>
<evidence type="ECO:0000255" key="1">
    <source>
        <dbReference type="HAMAP-Rule" id="MF_00385"/>
    </source>
</evidence>
<evidence type="ECO:0000305" key="2"/>